<protein>
    <recommendedName>
        <fullName evidence="1">UPF0122 protein M6_Spy0905</fullName>
    </recommendedName>
</protein>
<sequence>MNTMEIEKTNRMNALFEFYAALLTDKQMNYIELYYADDYSLAEIADEFGVSRQAVYDNIKRTEKILETYEMKLHMYSDYVVRSEIFDDMIAHYPHDEYLQEKISILTSIDNRE</sequence>
<reference key="1">
    <citation type="journal article" date="2004" name="J. Infect. Dis.">
        <title>Progress toward characterization of the group A Streptococcus metagenome: complete genome sequence of a macrolide-resistant serotype M6 strain.</title>
        <authorList>
            <person name="Banks D.J."/>
            <person name="Porcella S.F."/>
            <person name="Barbian K.D."/>
            <person name="Beres S.B."/>
            <person name="Philips L.E."/>
            <person name="Voyich J.M."/>
            <person name="DeLeo F.R."/>
            <person name="Martin J.M."/>
            <person name="Somerville G.A."/>
            <person name="Musser J.M."/>
        </authorList>
    </citation>
    <scope>NUCLEOTIDE SEQUENCE [LARGE SCALE GENOMIC DNA]</scope>
    <source>
        <strain>ATCC BAA-946 / MGAS10394</strain>
    </source>
</reference>
<comment type="function">
    <text evidence="1">Might take part in the signal recognition particle (SRP) pathway. This is inferred from the conservation of its genetic proximity to ftsY/ffh. May be a regulatory protein.</text>
</comment>
<comment type="similarity">
    <text evidence="1">Belongs to the UPF0122 family.</text>
</comment>
<dbReference type="EMBL" id="CP000003">
    <property type="protein sequence ID" value="AAT87040.1"/>
    <property type="molecule type" value="Genomic_DNA"/>
</dbReference>
<dbReference type="SMR" id="Q5XC23"/>
<dbReference type="KEGG" id="spa:M6_Spy0905"/>
<dbReference type="HOGENOM" id="CLU_129218_1_0_9"/>
<dbReference type="Proteomes" id="UP000001167">
    <property type="component" value="Chromosome"/>
</dbReference>
<dbReference type="Gene3D" id="1.10.10.10">
    <property type="entry name" value="Winged helix-like DNA-binding domain superfamily/Winged helix DNA-binding domain"/>
    <property type="match status" value="1"/>
</dbReference>
<dbReference type="HAMAP" id="MF_00245">
    <property type="entry name" value="UPF0122"/>
    <property type="match status" value="1"/>
</dbReference>
<dbReference type="InterPro" id="IPR013324">
    <property type="entry name" value="RNA_pol_sigma_r3/r4-like"/>
</dbReference>
<dbReference type="InterPro" id="IPR007394">
    <property type="entry name" value="UPF0122"/>
</dbReference>
<dbReference type="InterPro" id="IPR054831">
    <property type="entry name" value="UPF0122_fam_protein"/>
</dbReference>
<dbReference type="InterPro" id="IPR036388">
    <property type="entry name" value="WH-like_DNA-bd_sf"/>
</dbReference>
<dbReference type="NCBIfam" id="NF001066">
    <property type="entry name" value="PRK00118.1-1"/>
    <property type="match status" value="1"/>
</dbReference>
<dbReference type="NCBIfam" id="NF001068">
    <property type="entry name" value="PRK00118.1-4"/>
    <property type="match status" value="1"/>
</dbReference>
<dbReference type="NCBIfam" id="NF001070">
    <property type="entry name" value="PRK00118.1-6"/>
    <property type="match status" value="1"/>
</dbReference>
<dbReference type="NCBIfam" id="NF045758">
    <property type="entry name" value="YlxM"/>
    <property type="match status" value="1"/>
</dbReference>
<dbReference type="PANTHER" id="PTHR40083">
    <property type="entry name" value="UPF0122 PROTEIN CBO2450/CLC_2298"/>
    <property type="match status" value="1"/>
</dbReference>
<dbReference type="PANTHER" id="PTHR40083:SF1">
    <property type="entry name" value="UPF0122 PROTEIN YLXM"/>
    <property type="match status" value="1"/>
</dbReference>
<dbReference type="Pfam" id="PF04297">
    <property type="entry name" value="UPF0122"/>
    <property type="match status" value="1"/>
</dbReference>
<dbReference type="SUPFAM" id="SSF88659">
    <property type="entry name" value="Sigma3 and sigma4 domains of RNA polymerase sigma factors"/>
    <property type="match status" value="1"/>
</dbReference>
<feature type="chain" id="PRO_0000211890" description="UPF0122 protein M6_Spy0905">
    <location>
        <begin position="1"/>
        <end position="113"/>
    </location>
</feature>
<gene>
    <name type="ordered locus">M6_Spy0905</name>
</gene>
<accession>Q5XC23</accession>
<evidence type="ECO:0000255" key="1">
    <source>
        <dbReference type="HAMAP-Rule" id="MF_00245"/>
    </source>
</evidence>
<organism>
    <name type="scientific">Streptococcus pyogenes serotype M6 (strain ATCC BAA-946 / MGAS10394)</name>
    <dbReference type="NCBI Taxonomy" id="286636"/>
    <lineage>
        <taxon>Bacteria</taxon>
        <taxon>Bacillati</taxon>
        <taxon>Bacillota</taxon>
        <taxon>Bacilli</taxon>
        <taxon>Lactobacillales</taxon>
        <taxon>Streptococcaceae</taxon>
        <taxon>Streptococcus</taxon>
    </lineage>
</organism>
<proteinExistence type="inferred from homology"/>
<name>Y905_STRP6</name>